<evidence type="ECO:0000250" key="1">
    <source>
        <dbReference type="UniProtKB" id="D2Y2D1"/>
    </source>
</evidence>
<evidence type="ECO:0000269" key="2">
    <source>
    </source>
</evidence>
<evidence type="ECO:0000303" key="3">
    <source>
    </source>
</evidence>
<evidence type="ECO:0000305" key="4"/>
<evidence type="ECO:0000305" key="5">
    <source>
    </source>
</evidence>
<keyword id="KW-0903">Direct protein sequencing</keyword>
<keyword id="KW-1015">Disulfide bond</keyword>
<keyword id="KW-0872">Ion channel impairing toxin</keyword>
<keyword id="KW-0960">Knottin</keyword>
<keyword id="KW-0528">Neurotoxin</keyword>
<keyword id="KW-0964">Secreted</keyword>
<keyword id="KW-0800">Toxin</keyword>
<keyword id="KW-0738">Voltage-gated sodium channel impairing toxin</keyword>
<accession>P0DP95</accession>
<protein>
    <recommendedName>
        <fullName evidence="3">Mu-theraphotoxin-Osp1a</fullName>
        <shortName evidence="3">Mu-TRTX-Osp1a</shortName>
    </recommendedName>
</protein>
<organism>
    <name type="scientific">Orphnaecus sp. (strain Sibaliw/Philippines)</name>
    <name type="common">Tarantula spider</name>
    <dbReference type="NCBI Taxonomy" id="2024663"/>
    <lineage>
        <taxon>Eukaryota</taxon>
        <taxon>Metazoa</taxon>
        <taxon>Ecdysozoa</taxon>
        <taxon>Arthropoda</taxon>
        <taxon>Chelicerata</taxon>
        <taxon>Arachnida</taxon>
        <taxon>Araneae</taxon>
        <taxon>Mygalomorphae</taxon>
        <taxon>Theraphosidae</taxon>
        <taxon>Orphnaecus</taxon>
    </lineage>
</organism>
<comment type="function">
    <text evidence="2">Voltage-gated sodium channel Nav1.7/SCN9A inhibitor.</text>
</comment>
<comment type="subcellular location">
    <subcellularLocation>
        <location evidence="2">Secreted</location>
    </subcellularLocation>
</comment>
<comment type="tissue specificity">
    <text evidence="5">Expressed by the venom gland.</text>
</comment>
<comment type="mass spectrometry" mass="3692.5" method="MALDI" evidence="2">
    <text>Monoisotopic mass.</text>
</comment>
<comment type="similarity">
    <text evidence="4">Belongs to the neurotoxin 10 (Hwtx-1) family.</text>
</comment>
<reference key="1">
    <citation type="journal article" date="2015" name="Br. J. Pharmacol.">
        <title>Seven novel modulators of the analgesic target NaV 1.7 uncovered using a high-throughput venom-based discovery approach.</title>
        <authorList>
            <person name="Klint J.K."/>
            <person name="Smith J.J."/>
            <person name="Vetter I."/>
            <person name="Rupasinghe D.B."/>
            <person name="Er S.Y."/>
            <person name="Senff S."/>
            <person name="Herzig V."/>
            <person name="Mobli M."/>
            <person name="Lewis R.J."/>
            <person name="Bosmans F."/>
            <person name="King G.F."/>
        </authorList>
    </citation>
    <scope>PROTEIN SEQUENCE</scope>
    <scope>FUNCTION</scope>
    <scope>MASS SPECTROMETRY</scope>
    <scope>SUBCELLULAR LOCATION</scope>
    <source>
        <tissue>Venom</tissue>
    </source>
</reference>
<dbReference type="SMR" id="P0DP95"/>
<dbReference type="GO" id="GO:0005576">
    <property type="term" value="C:extracellular region"/>
    <property type="evidence" value="ECO:0007669"/>
    <property type="project" value="UniProtKB-SubCell"/>
</dbReference>
<dbReference type="GO" id="GO:0008200">
    <property type="term" value="F:ion channel inhibitor activity"/>
    <property type="evidence" value="ECO:0007669"/>
    <property type="project" value="InterPro"/>
</dbReference>
<dbReference type="GO" id="GO:0017080">
    <property type="term" value="F:sodium channel regulator activity"/>
    <property type="evidence" value="ECO:0007669"/>
    <property type="project" value="UniProtKB-KW"/>
</dbReference>
<dbReference type="GO" id="GO:0090729">
    <property type="term" value="F:toxin activity"/>
    <property type="evidence" value="ECO:0007669"/>
    <property type="project" value="UniProtKB-KW"/>
</dbReference>
<dbReference type="InterPro" id="IPR011696">
    <property type="entry name" value="Huwentoxin-1"/>
</dbReference>
<dbReference type="InterPro" id="IPR013140">
    <property type="entry name" value="Huwentoxin_CS1"/>
</dbReference>
<dbReference type="Pfam" id="PF07740">
    <property type="entry name" value="Toxin_12"/>
    <property type="match status" value="1"/>
</dbReference>
<dbReference type="SUPFAM" id="SSF57059">
    <property type="entry name" value="omega toxin-like"/>
    <property type="match status" value="1"/>
</dbReference>
<dbReference type="PROSITE" id="PS60021">
    <property type="entry name" value="HWTX_1"/>
    <property type="match status" value="1"/>
</dbReference>
<sequence length="33" mass="3701">GCKGFGKACKYGADECCKNLVCSKKHKWCKYTL</sequence>
<feature type="chain" id="PRO_0000441853" description="Mu-theraphotoxin-Osp1a" evidence="2">
    <location>
        <begin position="1"/>
        <end position="33"/>
    </location>
</feature>
<feature type="disulfide bond" evidence="1">
    <location>
        <begin position="2"/>
        <end position="17"/>
    </location>
</feature>
<feature type="disulfide bond" evidence="1">
    <location>
        <begin position="9"/>
        <end position="22"/>
    </location>
</feature>
<feature type="disulfide bond" evidence="1">
    <location>
        <begin position="16"/>
        <end position="29"/>
    </location>
</feature>
<name>NTA_ORPS2</name>
<proteinExistence type="evidence at protein level"/>